<organism>
    <name type="scientific">Thermosynechococcus vestitus (strain NIES-2133 / IAM M-273 / BP-1)</name>
    <dbReference type="NCBI Taxonomy" id="197221"/>
    <lineage>
        <taxon>Bacteria</taxon>
        <taxon>Bacillati</taxon>
        <taxon>Cyanobacteriota</taxon>
        <taxon>Cyanophyceae</taxon>
        <taxon>Acaryochloridales</taxon>
        <taxon>Thermosynechococcaceae</taxon>
        <taxon>Thermosynechococcus</taxon>
    </lineage>
</organism>
<comment type="function">
    <text evidence="1">One of several proteins that assist in the late maturation steps of the functional core of the 30S ribosomal subunit. Associates with free 30S ribosomal subunits (but not with 30S subunits that are part of 70S ribosomes or polysomes). Required for efficient processing of 16S rRNA. May interact with the 5'-terminal helix region of 16S rRNA.</text>
</comment>
<comment type="subunit">
    <text evidence="1">Monomer. Binds 30S ribosomal subunits, but not 50S ribosomal subunits or 70S ribosomes.</text>
</comment>
<comment type="subcellular location">
    <subcellularLocation>
        <location evidence="1">Cytoplasm</location>
    </subcellularLocation>
</comment>
<comment type="similarity">
    <text evidence="1">Belongs to the RbfA family.</text>
</comment>
<accession>Q8DIF9</accession>
<reference key="1">
    <citation type="journal article" date="2002" name="DNA Res.">
        <title>Complete genome structure of the thermophilic cyanobacterium Thermosynechococcus elongatus BP-1.</title>
        <authorList>
            <person name="Nakamura Y."/>
            <person name="Kaneko T."/>
            <person name="Sato S."/>
            <person name="Ikeuchi M."/>
            <person name="Katoh H."/>
            <person name="Sasamoto S."/>
            <person name="Watanabe A."/>
            <person name="Iriguchi M."/>
            <person name="Kawashima K."/>
            <person name="Kimura T."/>
            <person name="Kishida Y."/>
            <person name="Kiyokawa C."/>
            <person name="Kohara M."/>
            <person name="Matsumoto M."/>
            <person name="Matsuno A."/>
            <person name="Nakazaki N."/>
            <person name="Shimpo S."/>
            <person name="Sugimoto M."/>
            <person name="Takeuchi C."/>
            <person name="Yamada M."/>
            <person name="Tabata S."/>
        </authorList>
    </citation>
    <scope>NUCLEOTIDE SEQUENCE [LARGE SCALE GENOMIC DNA]</scope>
    <source>
        <strain>NIES-2133 / IAM M-273 / BP-1</strain>
    </source>
</reference>
<proteinExistence type="inferred from homology"/>
<evidence type="ECO:0000255" key="1">
    <source>
        <dbReference type="HAMAP-Rule" id="MF_00003"/>
    </source>
</evidence>
<protein>
    <recommendedName>
        <fullName evidence="1">Ribosome-binding factor A</fullName>
    </recommendedName>
</protein>
<keyword id="KW-0963">Cytoplasm</keyword>
<keyword id="KW-1185">Reference proteome</keyword>
<keyword id="KW-0690">Ribosome biogenesis</keyword>
<dbReference type="EMBL" id="BA000039">
    <property type="protein sequence ID" value="BAC09181.1"/>
    <property type="molecule type" value="Genomic_DNA"/>
</dbReference>
<dbReference type="RefSeq" id="NP_682419.1">
    <property type="nucleotide sequence ID" value="NC_004113.1"/>
</dbReference>
<dbReference type="RefSeq" id="WP_011057468.1">
    <property type="nucleotide sequence ID" value="NC_004113.1"/>
</dbReference>
<dbReference type="SMR" id="Q8DIF9"/>
<dbReference type="STRING" id="197221.gene:10748231"/>
<dbReference type="EnsemblBacteria" id="BAC09181">
    <property type="protein sequence ID" value="BAC09181"/>
    <property type="gene ID" value="BAC09181"/>
</dbReference>
<dbReference type="KEGG" id="tel:tll1629"/>
<dbReference type="PATRIC" id="fig|197221.4.peg.1708"/>
<dbReference type="eggNOG" id="COG0858">
    <property type="taxonomic scope" value="Bacteria"/>
</dbReference>
<dbReference type="Proteomes" id="UP000000440">
    <property type="component" value="Chromosome"/>
</dbReference>
<dbReference type="GO" id="GO:0005829">
    <property type="term" value="C:cytosol"/>
    <property type="evidence" value="ECO:0007669"/>
    <property type="project" value="TreeGrafter"/>
</dbReference>
<dbReference type="GO" id="GO:0043024">
    <property type="term" value="F:ribosomal small subunit binding"/>
    <property type="evidence" value="ECO:0007669"/>
    <property type="project" value="TreeGrafter"/>
</dbReference>
<dbReference type="GO" id="GO:0030490">
    <property type="term" value="P:maturation of SSU-rRNA"/>
    <property type="evidence" value="ECO:0007669"/>
    <property type="project" value="UniProtKB-UniRule"/>
</dbReference>
<dbReference type="Gene3D" id="3.30.300.20">
    <property type="match status" value="1"/>
</dbReference>
<dbReference type="HAMAP" id="MF_00003">
    <property type="entry name" value="RbfA"/>
    <property type="match status" value="1"/>
</dbReference>
<dbReference type="InterPro" id="IPR015946">
    <property type="entry name" value="KH_dom-like_a/b"/>
</dbReference>
<dbReference type="InterPro" id="IPR000238">
    <property type="entry name" value="RbfA"/>
</dbReference>
<dbReference type="InterPro" id="IPR023799">
    <property type="entry name" value="RbfA_dom_sf"/>
</dbReference>
<dbReference type="InterPro" id="IPR020053">
    <property type="entry name" value="Ribosome-bd_factorA_CS"/>
</dbReference>
<dbReference type="NCBIfam" id="TIGR00082">
    <property type="entry name" value="rbfA"/>
    <property type="match status" value="1"/>
</dbReference>
<dbReference type="PANTHER" id="PTHR33515">
    <property type="entry name" value="RIBOSOME-BINDING FACTOR A, CHLOROPLASTIC-RELATED"/>
    <property type="match status" value="1"/>
</dbReference>
<dbReference type="PANTHER" id="PTHR33515:SF1">
    <property type="entry name" value="RIBOSOME-BINDING FACTOR A, CHLOROPLASTIC-RELATED"/>
    <property type="match status" value="1"/>
</dbReference>
<dbReference type="Pfam" id="PF02033">
    <property type="entry name" value="RBFA"/>
    <property type="match status" value="1"/>
</dbReference>
<dbReference type="SUPFAM" id="SSF89919">
    <property type="entry name" value="Ribosome-binding factor A, RbfA"/>
    <property type="match status" value="1"/>
</dbReference>
<dbReference type="PROSITE" id="PS01319">
    <property type="entry name" value="RBFA"/>
    <property type="match status" value="1"/>
</dbReference>
<feature type="chain" id="PRO_0000102754" description="Ribosome-binding factor A">
    <location>
        <begin position="1"/>
        <end position="126"/>
    </location>
</feature>
<gene>
    <name evidence="1" type="primary">rbfA</name>
    <name type="ordered locus">tll1629</name>
</gene>
<sequence>MATERRVARVAELIKREVSQLLMYEIRDERVGAGMVSVTDVEVSGDLQHAKIFVSIYSTEEVRRSTMAGLKAASGFVRRELGQRIRLRRTPEVVFIEDRSLERGSRVLALLNQIGQQQSTSEVLES</sequence>
<name>RBFA_THEVB</name>